<accession>Q04KZ3</accession>
<name>PROB_STRP2</name>
<dbReference type="EC" id="2.7.2.11" evidence="1"/>
<dbReference type="EMBL" id="CP000410">
    <property type="protein sequence ID" value="ABJ55060.1"/>
    <property type="molecule type" value="Genomic_DNA"/>
</dbReference>
<dbReference type="RefSeq" id="WP_000875743.1">
    <property type="nucleotide sequence ID" value="NZ_JAMLJR010000004.1"/>
</dbReference>
<dbReference type="SMR" id="Q04KZ3"/>
<dbReference type="PaxDb" id="373153-SPD_0822"/>
<dbReference type="KEGG" id="spd:SPD_0822"/>
<dbReference type="eggNOG" id="COG0263">
    <property type="taxonomic scope" value="Bacteria"/>
</dbReference>
<dbReference type="HOGENOM" id="CLU_025400_2_0_9"/>
<dbReference type="UniPathway" id="UPA00098">
    <property type="reaction ID" value="UER00359"/>
</dbReference>
<dbReference type="Proteomes" id="UP000001452">
    <property type="component" value="Chromosome"/>
</dbReference>
<dbReference type="GO" id="GO:0005829">
    <property type="term" value="C:cytosol"/>
    <property type="evidence" value="ECO:0007669"/>
    <property type="project" value="TreeGrafter"/>
</dbReference>
<dbReference type="GO" id="GO:0005524">
    <property type="term" value="F:ATP binding"/>
    <property type="evidence" value="ECO:0007669"/>
    <property type="project" value="UniProtKB-KW"/>
</dbReference>
<dbReference type="GO" id="GO:0004349">
    <property type="term" value="F:glutamate 5-kinase activity"/>
    <property type="evidence" value="ECO:0007669"/>
    <property type="project" value="UniProtKB-UniRule"/>
</dbReference>
<dbReference type="GO" id="GO:0003723">
    <property type="term" value="F:RNA binding"/>
    <property type="evidence" value="ECO:0007669"/>
    <property type="project" value="InterPro"/>
</dbReference>
<dbReference type="GO" id="GO:0055129">
    <property type="term" value="P:L-proline biosynthetic process"/>
    <property type="evidence" value="ECO:0007669"/>
    <property type="project" value="UniProtKB-UniRule"/>
</dbReference>
<dbReference type="CDD" id="cd04242">
    <property type="entry name" value="AAK_G5K_ProB"/>
    <property type="match status" value="1"/>
</dbReference>
<dbReference type="CDD" id="cd21157">
    <property type="entry name" value="PUA_G5K"/>
    <property type="match status" value="1"/>
</dbReference>
<dbReference type="FunFam" id="2.30.130.10:FF:000011">
    <property type="entry name" value="Glutamate 5-kinase"/>
    <property type="match status" value="1"/>
</dbReference>
<dbReference type="FunFam" id="3.40.1160.10:FF:000018">
    <property type="entry name" value="Glutamate 5-kinase"/>
    <property type="match status" value="1"/>
</dbReference>
<dbReference type="Gene3D" id="3.40.1160.10">
    <property type="entry name" value="Acetylglutamate kinase-like"/>
    <property type="match status" value="1"/>
</dbReference>
<dbReference type="Gene3D" id="2.30.130.10">
    <property type="entry name" value="PUA domain"/>
    <property type="match status" value="1"/>
</dbReference>
<dbReference type="HAMAP" id="MF_00456">
    <property type="entry name" value="ProB"/>
    <property type="match status" value="1"/>
</dbReference>
<dbReference type="InterPro" id="IPR036393">
    <property type="entry name" value="AceGlu_kinase-like_sf"/>
</dbReference>
<dbReference type="InterPro" id="IPR001048">
    <property type="entry name" value="Asp/Glu/Uridylate_kinase"/>
</dbReference>
<dbReference type="InterPro" id="IPR041739">
    <property type="entry name" value="G5K_ProB"/>
</dbReference>
<dbReference type="InterPro" id="IPR001057">
    <property type="entry name" value="Glu/AcGlu_kinase"/>
</dbReference>
<dbReference type="InterPro" id="IPR011529">
    <property type="entry name" value="Glu_5kinase"/>
</dbReference>
<dbReference type="InterPro" id="IPR005715">
    <property type="entry name" value="Glu_5kinase/COase_Synthase"/>
</dbReference>
<dbReference type="InterPro" id="IPR019797">
    <property type="entry name" value="Glutamate_5-kinase_CS"/>
</dbReference>
<dbReference type="InterPro" id="IPR002478">
    <property type="entry name" value="PUA"/>
</dbReference>
<dbReference type="InterPro" id="IPR015947">
    <property type="entry name" value="PUA-like_sf"/>
</dbReference>
<dbReference type="InterPro" id="IPR036974">
    <property type="entry name" value="PUA_sf"/>
</dbReference>
<dbReference type="NCBIfam" id="TIGR01027">
    <property type="entry name" value="proB"/>
    <property type="match status" value="1"/>
</dbReference>
<dbReference type="PANTHER" id="PTHR43654">
    <property type="entry name" value="GLUTAMATE 5-KINASE"/>
    <property type="match status" value="1"/>
</dbReference>
<dbReference type="PANTHER" id="PTHR43654:SF1">
    <property type="entry name" value="ISOPENTENYL PHOSPHATE KINASE"/>
    <property type="match status" value="1"/>
</dbReference>
<dbReference type="Pfam" id="PF00696">
    <property type="entry name" value="AA_kinase"/>
    <property type="match status" value="1"/>
</dbReference>
<dbReference type="Pfam" id="PF01472">
    <property type="entry name" value="PUA"/>
    <property type="match status" value="1"/>
</dbReference>
<dbReference type="PIRSF" id="PIRSF000729">
    <property type="entry name" value="GK"/>
    <property type="match status" value="1"/>
</dbReference>
<dbReference type="PRINTS" id="PR00474">
    <property type="entry name" value="GLU5KINASE"/>
</dbReference>
<dbReference type="SMART" id="SM00359">
    <property type="entry name" value="PUA"/>
    <property type="match status" value="1"/>
</dbReference>
<dbReference type="SUPFAM" id="SSF53633">
    <property type="entry name" value="Carbamate kinase-like"/>
    <property type="match status" value="1"/>
</dbReference>
<dbReference type="SUPFAM" id="SSF88697">
    <property type="entry name" value="PUA domain-like"/>
    <property type="match status" value="1"/>
</dbReference>
<dbReference type="PROSITE" id="PS00902">
    <property type="entry name" value="GLUTAMATE_5_KINASE"/>
    <property type="match status" value="1"/>
</dbReference>
<dbReference type="PROSITE" id="PS50890">
    <property type="entry name" value="PUA"/>
    <property type="match status" value="1"/>
</dbReference>
<comment type="function">
    <text evidence="1">Catalyzes the transfer of a phosphate group to glutamate to form L-glutamate 5-phosphate.</text>
</comment>
<comment type="catalytic activity">
    <reaction evidence="1">
        <text>L-glutamate + ATP = L-glutamyl 5-phosphate + ADP</text>
        <dbReference type="Rhea" id="RHEA:14877"/>
        <dbReference type="ChEBI" id="CHEBI:29985"/>
        <dbReference type="ChEBI" id="CHEBI:30616"/>
        <dbReference type="ChEBI" id="CHEBI:58274"/>
        <dbReference type="ChEBI" id="CHEBI:456216"/>
        <dbReference type="EC" id="2.7.2.11"/>
    </reaction>
</comment>
<comment type="pathway">
    <text evidence="1">Amino-acid biosynthesis; L-proline biosynthesis; L-glutamate 5-semialdehyde from L-glutamate: step 1/2.</text>
</comment>
<comment type="subcellular location">
    <subcellularLocation>
        <location evidence="1">Cytoplasm</location>
    </subcellularLocation>
</comment>
<comment type="similarity">
    <text evidence="1">Belongs to the glutamate 5-kinase family.</text>
</comment>
<gene>
    <name evidence="1" type="primary">proB</name>
    <name type="ordered locus">SPD_0822</name>
</gene>
<protein>
    <recommendedName>
        <fullName evidence="1">Glutamate 5-kinase</fullName>
        <ecNumber evidence="1">2.7.2.11</ecNumber>
    </recommendedName>
    <alternativeName>
        <fullName evidence="1">Gamma-glutamyl kinase</fullName>
        <shortName evidence="1">GK</shortName>
    </alternativeName>
</protein>
<sequence>MKYKRIVFKVGTSSLTNEDGSLSRSKVKDITQQLAMLHEAGHELILVSSGAIAAGFGALGFKKRPTKIADKQASAAVGQGLLLEEYTTNLLLRQIVSAQILLTQDDFVDKRRYKNAHQALSVLLNRGAIPIINENDSVVIDELKVGDNDTLSAQVAAMVQADLLVFLTDVDGLYTGNPNSDPRAKRLERIETINREIIDMAGGAGSSNGTGGMLTKIKAATIATESGVPVYICSSLKSDSMIEAAEETEDGSYFVAQEKGLRTQKQWLAFYAQSQGSIWVDKGAAEALSQHGKSLLLSGIVEAEGVFSYGDIVTVFDKESGKSLGKGRVQFGASALEDILRSQKAKGVLIYRDDWISITPEIQLLFTEF</sequence>
<organism>
    <name type="scientific">Streptococcus pneumoniae serotype 2 (strain D39 / NCTC 7466)</name>
    <dbReference type="NCBI Taxonomy" id="373153"/>
    <lineage>
        <taxon>Bacteria</taxon>
        <taxon>Bacillati</taxon>
        <taxon>Bacillota</taxon>
        <taxon>Bacilli</taxon>
        <taxon>Lactobacillales</taxon>
        <taxon>Streptococcaceae</taxon>
        <taxon>Streptococcus</taxon>
    </lineage>
</organism>
<feature type="chain" id="PRO_1000081111" description="Glutamate 5-kinase">
    <location>
        <begin position="1"/>
        <end position="369"/>
    </location>
</feature>
<feature type="domain" description="PUA" evidence="1">
    <location>
        <begin position="275"/>
        <end position="355"/>
    </location>
</feature>
<feature type="binding site" evidence="1">
    <location>
        <position position="9"/>
    </location>
    <ligand>
        <name>ATP</name>
        <dbReference type="ChEBI" id="CHEBI:30616"/>
    </ligand>
</feature>
<feature type="binding site" evidence="1">
    <location>
        <position position="49"/>
    </location>
    <ligand>
        <name>substrate</name>
    </ligand>
</feature>
<feature type="binding site" evidence="1">
    <location>
        <position position="136"/>
    </location>
    <ligand>
        <name>substrate</name>
    </ligand>
</feature>
<feature type="binding site" evidence="1">
    <location>
        <position position="148"/>
    </location>
    <ligand>
        <name>substrate</name>
    </ligand>
</feature>
<feature type="binding site" evidence="1">
    <location>
        <begin position="168"/>
        <end position="169"/>
    </location>
    <ligand>
        <name>ATP</name>
        <dbReference type="ChEBI" id="CHEBI:30616"/>
    </ligand>
</feature>
<feature type="binding site" evidence="1">
    <location>
        <begin position="210"/>
        <end position="216"/>
    </location>
    <ligand>
        <name>ATP</name>
        <dbReference type="ChEBI" id="CHEBI:30616"/>
    </ligand>
</feature>
<evidence type="ECO:0000255" key="1">
    <source>
        <dbReference type="HAMAP-Rule" id="MF_00456"/>
    </source>
</evidence>
<reference key="1">
    <citation type="journal article" date="2007" name="J. Bacteriol.">
        <title>Genome sequence of Avery's virulent serotype 2 strain D39 of Streptococcus pneumoniae and comparison with that of unencapsulated laboratory strain R6.</title>
        <authorList>
            <person name="Lanie J.A."/>
            <person name="Ng W.-L."/>
            <person name="Kazmierczak K.M."/>
            <person name="Andrzejewski T.M."/>
            <person name="Davidsen T.M."/>
            <person name="Wayne K.J."/>
            <person name="Tettelin H."/>
            <person name="Glass J.I."/>
            <person name="Winkler M.E."/>
        </authorList>
    </citation>
    <scope>NUCLEOTIDE SEQUENCE [LARGE SCALE GENOMIC DNA]</scope>
    <source>
        <strain>D39 / NCTC 7466</strain>
    </source>
</reference>
<keyword id="KW-0028">Amino-acid biosynthesis</keyword>
<keyword id="KW-0067">ATP-binding</keyword>
<keyword id="KW-0963">Cytoplasm</keyword>
<keyword id="KW-0418">Kinase</keyword>
<keyword id="KW-0547">Nucleotide-binding</keyword>
<keyword id="KW-0641">Proline biosynthesis</keyword>
<keyword id="KW-1185">Reference proteome</keyword>
<keyword id="KW-0808">Transferase</keyword>
<proteinExistence type="inferred from homology"/>